<feature type="chain" id="PRO_0000277141" description="Photosystem I P700 chlorophyll a apoprotein A2">
    <location>
        <begin position="1"/>
        <end position="734"/>
    </location>
</feature>
<feature type="transmembrane region" description="Helical; Name=I" evidence="1">
    <location>
        <begin position="46"/>
        <end position="69"/>
    </location>
</feature>
<feature type="transmembrane region" description="Helical; Name=II" evidence="1">
    <location>
        <begin position="135"/>
        <end position="158"/>
    </location>
</feature>
<feature type="transmembrane region" description="Helical; Name=III" evidence="1">
    <location>
        <begin position="175"/>
        <end position="199"/>
    </location>
</feature>
<feature type="transmembrane region" description="Helical; Name=IV" evidence="1">
    <location>
        <begin position="273"/>
        <end position="291"/>
    </location>
</feature>
<feature type="transmembrane region" description="Helical; Name=V" evidence="1">
    <location>
        <begin position="330"/>
        <end position="353"/>
    </location>
</feature>
<feature type="transmembrane region" description="Helical; Name=VI" evidence="1">
    <location>
        <begin position="369"/>
        <end position="395"/>
    </location>
</feature>
<feature type="transmembrane region" description="Helical; Name=VII" evidence="1">
    <location>
        <begin position="417"/>
        <end position="439"/>
    </location>
</feature>
<feature type="transmembrane region" description="Helical; Name=VIII" evidence="1">
    <location>
        <begin position="517"/>
        <end position="535"/>
    </location>
</feature>
<feature type="transmembrane region" description="Helical; Name=IX" evidence="1">
    <location>
        <begin position="575"/>
        <end position="596"/>
    </location>
</feature>
<feature type="transmembrane region" description="Helical; Name=X" evidence="1">
    <location>
        <begin position="643"/>
        <end position="665"/>
    </location>
</feature>
<feature type="transmembrane region" description="Helical; Name=XI" evidence="1">
    <location>
        <begin position="707"/>
        <end position="727"/>
    </location>
</feature>
<feature type="binding site" evidence="1">
    <location>
        <position position="559"/>
    </location>
    <ligand>
        <name>[4Fe-4S] cluster</name>
        <dbReference type="ChEBI" id="CHEBI:49883"/>
        <note>ligand shared between dimeric partners</note>
    </ligand>
</feature>
<feature type="binding site" evidence="1">
    <location>
        <position position="568"/>
    </location>
    <ligand>
        <name>[4Fe-4S] cluster</name>
        <dbReference type="ChEBI" id="CHEBI:49883"/>
        <note>ligand shared between dimeric partners</note>
    </ligand>
</feature>
<feature type="binding site" description="axial binding residue" evidence="1">
    <location>
        <position position="654"/>
    </location>
    <ligand>
        <name>chlorophyll a</name>
        <dbReference type="ChEBI" id="CHEBI:58416"/>
        <label>B1</label>
    </ligand>
    <ligandPart>
        <name>Mg</name>
        <dbReference type="ChEBI" id="CHEBI:25107"/>
    </ligandPart>
</feature>
<feature type="binding site" description="axial binding residue" evidence="1">
    <location>
        <position position="662"/>
    </location>
    <ligand>
        <name>chlorophyll a</name>
        <dbReference type="ChEBI" id="CHEBI:58416"/>
        <label>B3</label>
    </ligand>
    <ligandPart>
        <name>Mg</name>
        <dbReference type="ChEBI" id="CHEBI:25107"/>
    </ligandPart>
</feature>
<feature type="binding site" evidence="1">
    <location>
        <position position="670"/>
    </location>
    <ligand>
        <name>chlorophyll a</name>
        <dbReference type="ChEBI" id="CHEBI:58416"/>
        <label>B3</label>
    </ligand>
</feature>
<feature type="binding site" evidence="1">
    <location>
        <position position="671"/>
    </location>
    <ligand>
        <name>phylloquinone</name>
        <dbReference type="ChEBI" id="CHEBI:18067"/>
        <label>B</label>
    </ligand>
</feature>
<geneLocation type="chloroplast"/>
<evidence type="ECO:0000255" key="1">
    <source>
        <dbReference type="HAMAP-Rule" id="MF_00482"/>
    </source>
</evidence>
<dbReference type="EC" id="1.97.1.12" evidence="1"/>
<dbReference type="EMBL" id="AP006715">
    <property type="protein sequence ID" value="BAE92408.1"/>
    <property type="molecule type" value="Genomic_DNA"/>
</dbReference>
<dbReference type="RefSeq" id="YP_536965.1">
    <property type="nucleotide sequence ID" value="NC_007932.1"/>
</dbReference>
<dbReference type="SMR" id="Q1XDK3"/>
<dbReference type="GeneID" id="3978947"/>
<dbReference type="GO" id="GO:0009535">
    <property type="term" value="C:chloroplast thylakoid membrane"/>
    <property type="evidence" value="ECO:0007669"/>
    <property type="project" value="UniProtKB-SubCell"/>
</dbReference>
<dbReference type="GO" id="GO:0009522">
    <property type="term" value="C:photosystem I"/>
    <property type="evidence" value="ECO:0007669"/>
    <property type="project" value="UniProtKB-KW"/>
</dbReference>
<dbReference type="GO" id="GO:0051539">
    <property type="term" value="F:4 iron, 4 sulfur cluster binding"/>
    <property type="evidence" value="ECO:0007669"/>
    <property type="project" value="UniProtKB-KW"/>
</dbReference>
<dbReference type="GO" id="GO:0016168">
    <property type="term" value="F:chlorophyll binding"/>
    <property type="evidence" value="ECO:0007669"/>
    <property type="project" value="UniProtKB-KW"/>
</dbReference>
<dbReference type="GO" id="GO:0009055">
    <property type="term" value="F:electron transfer activity"/>
    <property type="evidence" value="ECO:0007669"/>
    <property type="project" value="UniProtKB-UniRule"/>
</dbReference>
<dbReference type="GO" id="GO:0000287">
    <property type="term" value="F:magnesium ion binding"/>
    <property type="evidence" value="ECO:0007669"/>
    <property type="project" value="UniProtKB-UniRule"/>
</dbReference>
<dbReference type="GO" id="GO:0016491">
    <property type="term" value="F:oxidoreductase activity"/>
    <property type="evidence" value="ECO:0007669"/>
    <property type="project" value="UniProtKB-KW"/>
</dbReference>
<dbReference type="GO" id="GO:0015979">
    <property type="term" value="P:photosynthesis"/>
    <property type="evidence" value="ECO:0007669"/>
    <property type="project" value="UniProtKB-UniRule"/>
</dbReference>
<dbReference type="FunFam" id="1.20.1130.10:FF:000001">
    <property type="entry name" value="Photosystem I P700 chlorophyll a apoprotein A2"/>
    <property type="match status" value="1"/>
</dbReference>
<dbReference type="Gene3D" id="1.20.1130.10">
    <property type="entry name" value="Photosystem I PsaA/PsaB"/>
    <property type="match status" value="1"/>
</dbReference>
<dbReference type="HAMAP" id="MF_00482">
    <property type="entry name" value="PSI_PsaB"/>
    <property type="match status" value="1"/>
</dbReference>
<dbReference type="InterPro" id="IPR001280">
    <property type="entry name" value="PSI_PsaA/B"/>
</dbReference>
<dbReference type="InterPro" id="IPR020586">
    <property type="entry name" value="PSI_PsaA/B_CS"/>
</dbReference>
<dbReference type="InterPro" id="IPR036408">
    <property type="entry name" value="PSI_PsaA/B_sf"/>
</dbReference>
<dbReference type="InterPro" id="IPR006244">
    <property type="entry name" value="PSI_PsaB"/>
</dbReference>
<dbReference type="NCBIfam" id="TIGR01336">
    <property type="entry name" value="psaB"/>
    <property type="match status" value="1"/>
</dbReference>
<dbReference type="PANTHER" id="PTHR30128">
    <property type="entry name" value="OUTER MEMBRANE PROTEIN, OMPA-RELATED"/>
    <property type="match status" value="1"/>
</dbReference>
<dbReference type="PANTHER" id="PTHR30128:SF19">
    <property type="entry name" value="PHOTOSYSTEM I P700 CHLOROPHYLL A APOPROTEIN A1-RELATED"/>
    <property type="match status" value="1"/>
</dbReference>
<dbReference type="Pfam" id="PF00223">
    <property type="entry name" value="PsaA_PsaB"/>
    <property type="match status" value="1"/>
</dbReference>
<dbReference type="PIRSF" id="PIRSF002905">
    <property type="entry name" value="PSI_A"/>
    <property type="match status" value="1"/>
</dbReference>
<dbReference type="PRINTS" id="PR00257">
    <property type="entry name" value="PHOTSYSPSAAB"/>
</dbReference>
<dbReference type="SUPFAM" id="SSF81558">
    <property type="entry name" value="Photosystem I subunits PsaA/PsaB"/>
    <property type="match status" value="1"/>
</dbReference>
<dbReference type="PROSITE" id="PS00419">
    <property type="entry name" value="PHOTOSYSTEM_I_PSAAB"/>
    <property type="match status" value="1"/>
</dbReference>
<reference key="1">
    <citation type="submission" date="2003-11" db="EMBL/GenBank/DDBJ databases">
        <title>Whole genome sequence of Porphyra yezoensis chloroplast.</title>
        <authorList>
            <person name="Kunimoto M."/>
            <person name="Morishima K."/>
            <person name="Yoshikawa M."/>
            <person name="Fukuda S."/>
            <person name="Kobayashi T."/>
            <person name="Kobayashi M."/>
            <person name="Okazaki T."/>
            <person name="Ohara I."/>
            <person name="Nakayama I."/>
        </authorList>
    </citation>
    <scope>NUCLEOTIDE SEQUENCE [LARGE SCALE GENOMIC DNA]</scope>
    <source>
        <strain>U-51</strain>
    </source>
</reference>
<organism>
    <name type="scientific">Pyropia yezoensis</name>
    <name type="common">Susabi-nori</name>
    <name type="synonym">Porphyra yezoensis</name>
    <dbReference type="NCBI Taxonomy" id="2788"/>
    <lineage>
        <taxon>Eukaryota</taxon>
        <taxon>Rhodophyta</taxon>
        <taxon>Bangiophyceae</taxon>
        <taxon>Bangiales</taxon>
        <taxon>Bangiaceae</taxon>
        <taxon>Pyropia</taxon>
    </lineage>
</organism>
<protein>
    <recommendedName>
        <fullName evidence="1">Photosystem I P700 chlorophyll a apoprotein A2</fullName>
        <ecNumber evidence="1">1.97.1.12</ecNumber>
    </recommendedName>
    <alternativeName>
        <fullName evidence="1">PSI-B</fullName>
    </alternativeName>
    <alternativeName>
        <fullName evidence="1">PsaB</fullName>
    </alternativeName>
</protein>
<accession>Q1XDK3</accession>
<keyword id="KW-0004">4Fe-4S</keyword>
<keyword id="KW-0148">Chlorophyll</keyword>
<keyword id="KW-0150">Chloroplast</keyword>
<keyword id="KW-0157">Chromophore</keyword>
<keyword id="KW-0249">Electron transport</keyword>
<keyword id="KW-0408">Iron</keyword>
<keyword id="KW-0411">Iron-sulfur</keyword>
<keyword id="KW-0460">Magnesium</keyword>
<keyword id="KW-0472">Membrane</keyword>
<keyword id="KW-0479">Metal-binding</keyword>
<keyword id="KW-0560">Oxidoreductase</keyword>
<keyword id="KW-0602">Photosynthesis</keyword>
<keyword id="KW-0603">Photosystem I</keyword>
<keyword id="KW-0934">Plastid</keyword>
<keyword id="KW-0793">Thylakoid</keyword>
<keyword id="KW-0812">Transmembrane</keyword>
<keyword id="KW-1133">Transmembrane helix</keyword>
<keyword id="KW-0813">Transport</keyword>
<gene>
    <name evidence="1" type="primary">psaB</name>
</gene>
<sequence>MATKFPKFSQALSQDPTTRRIWYGIATAHDFESHDGMTEENLYQKIFASHFGHLAIIFLWTSGNLFHVAWQGNFEQWVLNPLKVKPIAHAIWDPHFGQPALKAFSKGGSAYPVNIAYSGVYHWWYTIGMRSNQDLYSGALFLLVLSALLLFGGWLHLQPKFKPGLSWFKNNEPRLNHHLSGLFGVSSLARTGHLVHVAIPEARGQHVGWDNFTTVLPHPAGLQPFFSGNWSVYAQNPDTAQHLFGTNEGAGTAILTFLGGFHPQSQSLWLTDMAHHHLAIAVVFIVAGHMYRTNWGIGHNLKDILDAHRPPSGRLGAGHKGLFDTITNSLHIQLGLALASLGVITSLVAQHMYAMPPYAFMAKDFTTQASLYTHHQYIAGFLMVGAFAHGAIFFVRDYDPEQNKDNVLARMLEHKEAIISHLSWVTLFLGFHTLGLYVHNDTMIAFGTPEKQILIEPVFAQWIQASSGKALYGFDVLLSSSTNIATQAGSNIWLPGWLEAINSGKNSLFLTIGPGDFLVHHAIALGLHTTTLILVKGALDARGSKLMPDKKDFGYSFPCDGPGRGGTCDISAWDAFYLAVFWMLNTIGWVTFYWHWKHITIWQGNATQFNESSTYLMGWFRDYLWLNSSPLINGYNPYGMNNLSVWSWMFLFGHLVWATGFMFLISWRGYWQELIETLAWAHERTPLANLIRWKDKPVALSIVQARLVGLAHFSVGYVLTYAAFVLASTAGKFG</sequence>
<comment type="function">
    <text evidence="1">PsaA and PsaB bind P700, the primary electron donor of photosystem I (PSI), as well as the electron acceptors A0, A1 and FX. PSI is a plastocyanin/cytochrome c6-ferredoxin oxidoreductase, converting photonic excitation into a charge separation, which transfers an electron from the donor P700 chlorophyll pair to the spectroscopically characterized acceptors A0, A1, FX, FA and FB in turn. Oxidized P700 is reduced on the lumenal side of the thylakoid membrane by plastocyanin or cytochrome c6.</text>
</comment>
<comment type="catalytic activity">
    <reaction evidence="1">
        <text>reduced [plastocyanin] + hnu + oxidized [2Fe-2S]-[ferredoxin] = oxidized [plastocyanin] + reduced [2Fe-2S]-[ferredoxin]</text>
        <dbReference type="Rhea" id="RHEA:30407"/>
        <dbReference type="Rhea" id="RHEA-COMP:10000"/>
        <dbReference type="Rhea" id="RHEA-COMP:10001"/>
        <dbReference type="Rhea" id="RHEA-COMP:10039"/>
        <dbReference type="Rhea" id="RHEA-COMP:10040"/>
        <dbReference type="ChEBI" id="CHEBI:29036"/>
        <dbReference type="ChEBI" id="CHEBI:30212"/>
        <dbReference type="ChEBI" id="CHEBI:33737"/>
        <dbReference type="ChEBI" id="CHEBI:33738"/>
        <dbReference type="ChEBI" id="CHEBI:49552"/>
        <dbReference type="EC" id="1.97.1.12"/>
    </reaction>
</comment>
<comment type="cofactor">
    <text evidence="1">P700 is a chlorophyll a/chlorophyll a' dimer, A0 is one or more chlorophyll a, A1 is one or both phylloquinones and FX is a shared 4Fe-4S iron-sulfur center.</text>
</comment>
<comment type="subunit">
    <text evidence="1">The PsaA/B heterodimer binds the P700 chlorophyll special pair and subsequent electron acceptors. PSI consists of a core antenna complex that captures photons, and an electron transfer chain that converts photonic excitation into a charge separation. The eukaryotic PSI reaction center is composed of at least 11 subunits.</text>
</comment>
<comment type="subcellular location">
    <subcellularLocation>
        <location>Plastid</location>
        <location>Chloroplast thylakoid membrane</location>
        <topology>Multi-pass membrane protein</topology>
    </subcellularLocation>
</comment>
<comment type="similarity">
    <text evidence="1">Belongs to the PsaA/PsaB family.</text>
</comment>
<name>PSAB_PYRYE</name>
<proteinExistence type="inferred from homology"/>